<gene>
    <name evidence="1" type="primary">lon</name>
    <name type="ordered locus">RP450</name>
</gene>
<reference key="1">
    <citation type="journal article" date="1998" name="Nature">
        <title>The genome sequence of Rickettsia prowazekii and the origin of mitochondria.</title>
        <authorList>
            <person name="Andersson S.G.E."/>
            <person name="Zomorodipour A."/>
            <person name="Andersson J.O."/>
            <person name="Sicheritz-Ponten T."/>
            <person name="Alsmark U.C.M."/>
            <person name="Podowski R.M."/>
            <person name="Naeslund A.K."/>
            <person name="Eriksson A.-S."/>
            <person name="Winkler H.H."/>
            <person name="Kurland C.G."/>
        </authorList>
    </citation>
    <scope>NUCLEOTIDE SEQUENCE [LARGE SCALE GENOMIC DNA]</scope>
    <source>
        <strain>Madrid E</strain>
    </source>
</reference>
<protein>
    <recommendedName>
        <fullName evidence="1">Lon protease</fullName>
        <ecNumber evidence="1">3.4.21.53</ecNumber>
    </recommendedName>
    <alternativeName>
        <fullName evidence="1">ATP-dependent protease La</fullName>
    </alternativeName>
</protein>
<dbReference type="EC" id="3.4.21.53" evidence="1"/>
<dbReference type="EMBL" id="AJ235271">
    <property type="protein sequence ID" value="CAA14907.1"/>
    <property type="molecule type" value="Genomic_DNA"/>
</dbReference>
<dbReference type="PIR" id="A71704">
    <property type="entry name" value="A71704"/>
</dbReference>
<dbReference type="RefSeq" id="NP_220831.1">
    <property type="nucleotide sequence ID" value="NC_000963.1"/>
</dbReference>
<dbReference type="RefSeq" id="WP_004597677.1">
    <property type="nucleotide sequence ID" value="NC_000963.1"/>
</dbReference>
<dbReference type="SMR" id="Q9ZD92"/>
<dbReference type="STRING" id="272947.gene:17555530"/>
<dbReference type="MEROPS" id="S16.001"/>
<dbReference type="EnsemblBacteria" id="CAA14907">
    <property type="protein sequence ID" value="CAA14907"/>
    <property type="gene ID" value="CAA14907"/>
</dbReference>
<dbReference type="GeneID" id="57569575"/>
<dbReference type="KEGG" id="rpr:RP450"/>
<dbReference type="PATRIC" id="fig|272947.5.peg.463"/>
<dbReference type="eggNOG" id="COG0466">
    <property type="taxonomic scope" value="Bacteria"/>
</dbReference>
<dbReference type="HOGENOM" id="CLU_004109_4_3_5"/>
<dbReference type="OrthoDB" id="9803599at2"/>
<dbReference type="Proteomes" id="UP000002480">
    <property type="component" value="Chromosome"/>
</dbReference>
<dbReference type="GO" id="GO:0005737">
    <property type="term" value="C:cytoplasm"/>
    <property type="evidence" value="ECO:0007669"/>
    <property type="project" value="UniProtKB-SubCell"/>
</dbReference>
<dbReference type="GO" id="GO:0005524">
    <property type="term" value="F:ATP binding"/>
    <property type="evidence" value="ECO:0007669"/>
    <property type="project" value="UniProtKB-UniRule"/>
</dbReference>
<dbReference type="GO" id="GO:0016887">
    <property type="term" value="F:ATP hydrolysis activity"/>
    <property type="evidence" value="ECO:0007669"/>
    <property type="project" value="UniProtKB-UniRule"/>
</dbReference>
<dbReference type="GO" id="GO:0004176">
    <property type="term" value="F:ATP-dependent peptidase activity"/>
    <property type="evidence" value="ECO:0007669"/>
    <property type="project" value="UniProtKB-UniRule"/>
</dbReference>
<dbReference type="GO" id="GO:0043565">
    <property type="term" value="F:sequence-specific DNA binding"/>
    <property type="evidence" value="ECO:0007669"/>
    <property type="project" value="UniProtKB-UniRule"/>
</dbReference>
<dbReference type="GO" id="GO:0004252">
    <property type="term" value="F:serine-type endopeptidase activity"/>
    <property type="evidence" value="ECO:0007669"/>
    <property type="project" value="UniProtKB-UniRule"/>
</dbReference>
<dbReference type="GO" id="GO:0034605">
    <property type="term" value="P:cellular response to heat"/>
    <property type="evidence" value="ECO:0007669"/>
    <property type="project" value="UniProtKB-UniRule"/>
</dbReference>
<dbReference type="GO" id="GO:0006515">
    <property type="term" value="P:protein quality control for misfolded or incompletely synthesized proteins"/>
    <property type="evidence" value="ECO:0007669"/>
    <property type="project" value="UniProtKB-UniRule"/>
</dbReference>
<dbReference type="CDD" id="cd19500">
    <property type="entry name" value="RecA-like_Lon"/>
    <property type="match status" value="1"/>
</dbReference>
<dbReference type="FunFam" id="1.20.5.5270:FF:000002">
    <property type="entry name" value="Lon protease homolog"/>
    <property type="match status" value="1"/>
</dbReference>
<dbReference type="FunFam" id="3.40.50.300:FF:000021">
    <property type="entry name" value="Lon protease homolog"/>
    <property type="match status" value="1"/>
</dbReference>
<dbReference type="Gene3D" id="1.10.8.60">
    <property type="match status" value="1"/>
</dbReference>
<dbReference type="Gene3D" id="1.20.5.5270">
    <property type="match status" value="1"/>
</dbReference>
<dbReference type="Gene3D" id="1.20.58.1480">
    <property type="match status" value="1"/>
</dbReference>
<dbReference type="Gene3D" id="3.30.230.10">
    <property type="match status" value="1"/>
</dbReference>
<dbReference type="Gene3D" id="2.30.130.40">
    <property type="entry name" value="LON domain-like"/>
    <property type="match status" value="1"/>
</dbReference>
<dbReference type="Gene3D" id="3.40.50.300">
    <property type="entry name" value="P-loop containing nucleotide triphosphate hydrolases"/>
    <property type="match status" value="1"/>
</dbReference>
<dbReference type="HAMAP" id="MF_01973">
    <property type="entry name" value="lon_bact"/>
    <property type="match status" value="1"/>
</dbReference>
<dbReference type="InterPro" id="IPR003593">
    <property type="entry name" value="AAA+_ATPase"/>
</dbReference>
<dbReference type="InterPro" id="IPR003959">
    <property type="entry name" value="ATPase_AAA_core"/>
</dbReference>
<dbReference type="InterPro" id="IPR027543">
    <property type="entry name" value="Lon_bac"/>
</dbReference>
<dbReference type="InterPro" id="IPR004815">
    <property type="entry name" value="Lon_bac/euk-typ"/>
</dbReference>
<dbReference type="InterPro" id="IPR054594">
    <property type="entry name" value="Lon_lid"/>
</dbReference>
<dbReference type="InterPro" id="IPR008269">
    <property type="entry name" value="Lon_proteolytic"/>
</dbReference>
<dbReference type="InterPro" id="IPR027065">
    <property type="entry name" value="Lon_Prtase"/>
</dbReference>
<dbReference type="InterPro" id="IPR003111">
    <property type="entry name" value="Lon_prtase_N"/>
</dbReference>
<dbReference type="InterPro" id="IPR046336">
    <property type="entry name" value="Lon_prtase_N_sf"/>
</dbReference>
<dbReference type="InterPro" id="IPR027417">
    <property type="entry name" value="P-loop_NTPase"/>
</dbReference>
<dbReference type="InterPro" id="IPR008268">
    <property type="entry name" value="Peptidase_S16_AS"/>
</dbReference>
<dbReference type="InterPro" id="IPR015947">
    <property type="entry name" value="PUA-like_sf"/>
</dbReference>
<dbReference type="InterPro" id="IPR020568">
    <property type="entry name" value="Ribosomal_Su5_D2-typ_SF"/>
</dbReference>
<dbReference type="InterPro" id="IPR014721">
    <property type="entry name" value="Ribsml_uS5_D2-typ_fold_subgr"/>
</dbReference>
<dbReference type="NCBIfam" id="TIGR00763">
    <property type="entry name" value="lon"/>
    <property type="match status" value="1"/>
</dbReference>
<dbReference type="NCBIfam" id="NF008053">
    <property type="entry name" value="PRK10787.1"/>
    <property type="match status" value="1"/>
</dbReference>
<dbReference type="PANTHER" id="PTHR10046">
    <property type="entry name" value="ATP DEPENDENT LON PROTEASE FAMILY MEMBER"/>
    <property type="match status" value="1"/>
</dbReference>
<dbReference type="Pfam" id="PF00004">
    <property type="entry name" value="AAA"/>
    <property type="match status" value="1"/>
</dbReference>
<dbReference type="Pfam" id="PF05362">
    <property type="entry name" value="Lon_C"/>
    <property type="match status" value="1"/>
</dbReference>
<dbReference type="Pfam" id="PF22667">
    <property type="entry name" value="Lon_lid"/>
    <property type="match status" value="1"/>
</dbReference>
<dbReference type="Pfam" id="PF02190">
    <property type="entry name" value="LON_substr_bdg"/>
    <property type="match status" value="1"/>
</dbReference>
<dbReference type="PIRSF" id="PIRSF001174">
    <property type="entry name" value="Lon_proteas"/>
    <property type="match status" value="1"/>
</dbReference>
<dbReference type="PRINTS" id="PR00830">
    <property type="entry name" value="ENDOLAPTASE"/>
</dbReference>
<dbReference type="SMART" id="SM00382">
    <property type="entry name" value="AAA"/>
    <property type="match status" value="1"/>
</dbReference>
<dbReference type="SMART" id="SM00464">
    <property type="entry name" value="LON"/>
    <property type="match status" value="1"/>
</dbReference>
<dbReference type="SUPFAM" id="SSF52540">
    <property type="entry name" value="P-loop containing nucleoside triphosphate hydrolases"/>
    <property type="match status" value="1"/>
</dbReference>
<dbReference type="SUPFAM" id="SSF88697">
    <property type="entry name" value="PUA domain-like"/>
    <property type="match status" value="1"/>
</dbReference>
<dbReference type="SUPFAM" id="SSF54211">
    <property type="entry name" value="Ribosomal protein S5 domain 2-like"/>
    <property type="match status" value="1"/>
</dbReference>
<dbReference type="PROSITE" id="PS51787">
    <property type="entry name" value="LON_N"/>
    <property type="match status" value="1"/>
</dbReference>
<dbReference type="PROSITE" id="PS51786">
    <property type="entry name" value="LON_PROTEOLYTIC"/>
    <property type="match status" value="1"/>
</dbReference>
<dbReference type="PROSITE" id="PS01046">
    <property type="entry name" value="LON_SER"/>
    <property type="match status" value="1"/>
</dbReference>
<feature type="chain" id="PRO_0000076145" description="Lon protease">
    <location>
        <begin position="1"/>
        <end position="784"/>
    </location>
</feature>
<feature type="domain" description="Lon N-terminal" evidence="3">
    <location>
        <begin position="6"/>
        <end position="207"/>
    </location>
</feature>
<feature type="domain" description="Lon proteolytic" evidence="2">
    <location>
        <begin position="592"/>
        <end position="773"/>
    </location>
</feature>
<feature type="active site" evidence="1">
    <location>
        <position position="679"/>
    </location>
</feature>
<feature type="active site" evidence="1">
    <location>
        <position position="722"/>
    </location>
</feature>
<feature type="binding site" evidence="1">
    <location>
        <begin position="356"/>
        <end position="363"/>
    </location>
    <ligand>
        <name>ATP</name>
        <dbReference type="ChEBI" id="CHEBI:30616"/>
    </ligand>
</feature>
<name>LON_RICPR</name>
<comment type="function">
    <text evidence="1">ATP-dependent serine protease that mediates the selective degradation of mutant and abnormal proteins as well as certain short-lived regulatory proteins. Required for cellular homeostasis and for survival from DNA damage and developmental changes induced by stress. Degrades polypeptides processively to yield small peptide fragments that are 5 to 10 amino acids long. Binds to DNA in a double-stranded, site-specific manner.</text>
</comment>
<comment type="catalytic activity">
    <reaction evidence="1">
        <text>Hydrolysis of proteins in presence of ATP.</text>
        <dbReference type="EC" id="3.4.21.53"/>
    </reaction>
</comment>
<comment type="subunit">
    <text evidence="1">Homohexamer. Organized in a ring with a central cavity.</text>
</comment>
<comment type="subcellular location">
    <subcellularLocation>
        <location evidence="1">Cytoplasm</location>
    </subcellularLocation>
</comment>
<comment type="induction">
    <text evidence="1">By heat shock.</text>
</comment>
<comment type="similarity">
    <text evidence="1">Belongs to the peptidase S16 family.</text>
</comment>
<sequence length="784" mass="88071">MNKKSLPLMALRDMVVFPGVIAPIFVGRKKSLQALSRTTISEENNSKYILVTLQKKFDQENPSKHELYNTAILAKIIQIVKLPNNTAKILIEAVARVKLSNIKDEEAFEANYEIIPDEEILDIHNMRSLVDNAVQLFSKYAMNDKKVNAEIIETINKEISNRTNFINIINILSSHLITSLETKQQLLEETNPVKRITTVITTLTSNIVNSETEHALQQRVRKQIEKTQRDYYLHEQMKAIQKELDEDKSELADIEKKIKSLKLSKEAKEKAESEFKKLRAMNQMSAESGVTRNYLETLLSLPWGKYDNSKIDINQAEKILNRDHFGLEKVKERIIEYLAVLQRSSKIRGPILCLIGPPGVGKTSLVKSIAEGMGRKYTKFSLGGVRDEAEIRGHRKTYLGSMPGKILGQLKKIKTSNPVMLLDEIDKMSSDFRGDPASALLEVLDPEQNSHFVDHYLEVEYDLSNVVFIATANSHDLPRALSDRMEKIYISGYVEEEKLQIAKNYLVPKQFKMHKIKEDEITISEAAILDLIRYYTKESGVRALEREICALTRKALKQILANKTVKHISIDSNNLEEFLGAKKYNFGLAEKEDQIGSTTGLAYTEVGGELLTIEALAFSGKGEIKTTGKLGDVMKESAMAAYSCFRSRATNFGLKYDNYKDFDIHIHVPAGAIPKDGPSAGCALFTTIVSLMTKIPVHRTVAMTGEITLRGNVLPIGGLKEKLLAASRGGIKTVLIPEENVKDLKDIPPNIKENLEIISVSNIDQVLKHALVEMPINKGLSYDL</sequence>
<organism>
    <name type="scientific">Rickettsia prowazekii (strain Madrid E)</name>
    <dbReference type="NCBI Taxonomy" id="272947"/>
    <lineage>
        <taxon>Bacteria</taxon>
        <taxon>Pseudomonadati</taxon>
        <taxon>Pseudomonadota</taxon>
        <taxon>Alphaproteobacteria</taxon>
        <taxon>Rickettsiales</taxon>
        <taxon>Rickettsiaceae</taxon>
        <taxon>Rickettsieae</taxon>
        <taxon>Rickettsia</taxon>
        <taxon>typhus group</taxon>
    </lineage>
</organism>
<evidence type="ECO:0000255" key="1">
    <source>
        <dbReference type="HAMAP-Rule" id="MF_01973"/>
    </source>
</evidence>
<evidence type="ECO:0000255" key="2">
    <source>
        <dbReference type="PROSITE-ProRule" id="PRU01122"/>
    </source>
</evidence>
<evidence type="ECO:0000255" key="3">
    <source>
        <dbReference type="PROSITE-ProRule" id="PRU01123"/>
    </source>
</evidence>
<accession>Q9ZD92</accession>
<proteinExistence type="inferred from homology"/>
<keyword id="KW-0067">ATP-binding</keyword>
<keyword id="KW-0963">Cytoplasm</keyword>
<keyword id="KW-0378">Hydrolase</keyword>
<keyword id="KW-0547">Nucleotide-binding</keyword>
<keyword id="KW-0645">Protease</keyword>
<keyword id="KW-1185">Reference proteome</keyword>
<keyword id="KW-0720">Serine protease</keyword>
<keyword id="KW-0346">Stress response</keyword>